<dbReference type="EMBL" id="GU292941">
    <property type="protein sequence ID" value="ADB56757.1"/>
    <property type="molecule type" value="mRNA"/>
</dbReference>
<dbReference type="ArachnoServer" id="AS001592">
    <property type="toxin name" value="U11-theraphotoxin-Hhn1a"/>
</dbReference>
<dbReference type="GO" id="GO:0005576">
    <property type="term" value="C:extracellular region"/>
    <property type="evidence" value="ECO:0007669"/>
    <property type="project" value="UniProtKB-SubCell"/>
</dbReference>
<dbReference type="GO" id="GO:0019871">
    <property type="term" value="F:sodium channel inhibitor activity"/>
    <property type="evidence" value="ECO:0007669"/>
    <property type="project" value="InterPro"/>
</dbReference>
<dbReference type="GO" id="GO:0090729">
    <property type="term" value="F:toxin activity"/>
    <property type="evidence" value="ECO:0007669"/>
    <property type="project" value="UniProtKB-KW"/>
</dbReference>
<dbReference type="InterPro" id="IPR012627">
    <property type="entry name" value="Toxin_22"/>
</dbReference>
<dbReference type="Pfam" id="PF08092">
    <property type="entry name" value="Toxin_22"/>
    <property type="match status" value="1"/>
</dbReference>
<comment type="function">
    <text evidence="1">Probable ion channel inhibitor.</text>
</comment>
<comment type="subcellular location">
    <subcellularLocation>
        <location>Secreted</location>
    </subcellularLocation>
</comment>
<comment type="tissue specificity">
    <text>Expressed by the venom gland.</text>
</comment>
<comment type="domain">
    <text evidence="1">The presence of a 'disulfide through disulfide knot' structurally defines this protein as a knottin.</text>
</comment>
<comment type="similarity">
    <text evidence="5">Belongs to the neurotoxin 14 (magi-1) family. 01 (HNTX-16) subfamily.</text>
</comment>
<accession>D2Y264</accession>
<organism>
    <name type="scientific">Cyriopagopus hainanus</name>
    <name type="common">Chinese bird spider</name>
    <name type="synonym">Haplopelma hainanum</name>
    <dbReference type="NCBI Taxonomy" id="209901"/>
    <lineage>
        <taxon>Eukaryota</taxon>
        <taxon>Metazoa</taxon>
        <taxon>Ecdysozoa</taxon>
        <taxon>Arthropoda</taxon>
        <taxon>Chelicerata</taxon>
        <taxon>Arachnida</taxon>
        <taxon>Araneae</taxon>
        <taxon>Mygalomorphae</taxon>
        <taxon>Theraphosidae</taxon>
        <taxon>Haplopelma</taxon>
    </lineage>
</organism>
<keyword id="KW-0903">Direct protein sequencing</keyword>
<keyword id="KW-1015">Disulfide bond</keyword>
<keyword id="KW-0872">Ion channel impairing toxin</keyword>
<keyword id="KW-0960">Knottin</keyword>
<keyword id="KW-0964">Secreted</keyword>
<keyword id="KW-0732">Signal</keyword>
<keyword id="KW-0800">Toxin</keyword>
<sequence length="113" mass="13061">MNTVRATFLLVFVLAVSLGQADKDENRMEMQEKTEQGKSYLDFAENLLLQKLEELEAKLLEEDSEESRNSRQKRCIGEGVPCDENDPRCCSGLVCLKPTLHGIWYKSYYCYKK</sequence>
<name>H1612_CYRHA</name>
<evidence type="ECO:0000250" key="1"/>
<evidence type="ECO:0000255" key="2"/>
<evidence type="ECO:0000256" key="3">
    <source>
        <dbReference type="SAM" id="MobiDB-lite"/>
    </source>
</evidence>
<evidence type="ECO:0000269" key="4">
    <source>
    </source>
</evidence>
<evidence type="ECO:0000305" key="5"/>
<proteinExistence type="evidence at protein level"/>
<reference key="1">
    <citation type="journal article" date="2010" name="J. Proteome Res.">
        <title>Molecular diversification of peptide toxins from the tarantula Haplopelma hainanum (Ornithoctonus hainana) venom based on transcriptomic, peptidomic, and genomic analyses.</title>
        <authorList>
            <person name="Tang X."/>
            <person name="Zhang Y."/>
            <person name="Hu W."/>
            <person name="Xu D."/>
            <person name="Tao H."/>
            <person name="Yang X."/>
            <person name="Li Y."/>
            <person name="Jiang L."/>
            <person name="Liang S."/>
        </authorList>
    </citation>
    <scope>NUCLEOTIDE SEQUENCE [LARGE SCALE MRNA]</scope>
    <scope>PROTEIN SEQUENCE OF 75-113</scope>
    <scope>IDENTIFICATION BY MASS SPECTROMETRY</scope>
    <source>
        <tissue>Venom</tissue>
        <tissue>Venom gland</tissue>
    </source>
</reference>
<protein>
    <recommendedName>
        <fullName>U11-theraphotoxin-Hhn1a</fullName>
        <shortName>U11-TRTX-Hhn1a</shortName>
    </recommendedName>
    <alternativeName>
        <fullName>Hainantoxin-XVI.12</fullName>
        <shortName>HNTX-XVI.12</shortName>
    </alternativeName>
    <alternativeName>
        <fullName>Peptide F4-19.87</fullName>
    </alternativeName>
</protein>
<feature type="signal peptide" evidence="2">
    <location>
        <begin position="1"/>
        <end position="21"/>
    </location>
</feature>
<feature type="propeptide" id="PRO_0000400879" evidence="4">
    <location>
        <begin position="22"/>
        <end position="74"/>
    </location>
</feature>
<feature type="peptide" id="PRO_0000400880" description="U11-theraphotoxin-Hhn1a">
    <location>
        <begin position="75"/>
        <end position="113"/>
    </location>
</feature>
<feature type="region of interest" description="Disordered" evidence="3">
    <location>
        <begin position="60"/>
        <end position="82"/>
    </location>
</feature>
<feature type="compositionally biased region" description="Basic and acidic residues" evidence="3">
    <location>
        <begin position="60"/>
        <end position="69"/>
    </location>
</feature>
<feature type="disulfide bond" evidence="1">
    <location>
        <begin position="75"/>
        <end position="90"/>
    </location>
</feature>
<feature type="disulfide bond" evidence="1">
    <location>
        <begin position="82"/>
        <end position="95"/>
    </location>
</feature>
<feature type="disulfide bond" evidence="1">
    <location>
        <begin position="89"/>
        <end position="110"/>
    </location>
</feature>